<gene>
    <name type="primary">sinR</name>
    <name type="ordered locus">STM0304</name>
</gene>
<proteinExistence type="inferred from homology"/>
<reference key="1">
    <citation type="journal article" date="1993" name="Proc. Natl. Acad. Sci. U.S.A.">
        <title>Molecular, functional, and evolutionary analysis of sequences specific to Salmonella.</title>
        <authorList>
            <person name="Groisman E.A."/>
            <person name="Sturmoski M.A."/>
            <person name="Solomon F.R."/>
            <person name="Lin R."/>
            <person name="Ochman H."/>
        </authorList>
    </citation>
    <scope>NUCLEOTIDE SEQUENCE [GENOMIC DNA]</scope>
</reference>
<reference key="2">
    <citation type="journal article" date="2001" name="Nature">
        <title>Complete genome sequence of Salmonella enterica serovar Typhimurium LT2.</title>
        <authorList>
            <person name="McClelland M."/>
            <person name="Sanderson K.E."/>
            <person name="Spieth J."/>
            <person name="Clifton S.W."/>
            <person name="Latreille P."/>
            <person name="Courtney L."/>
            <person name="Porwollik S."/>
            <person name="Ali J."/>
            <person name="Dante M."/>
            <person name="Du F."/>
            <person name="Hou S."/>
            <person name="Layman D."/>
            <person name="Leonard S."/>
            <person name="Nguyen C."/>
            <person name="Scott K."/>
            <person name="Holmes A."/>
            <person name="Grewal N."/>
            <person name="Mulvaney E."/>
            <person name="Ryan E."/>
            <person name="Sun H."/>
            <person name="Florea L."/>
            <person name="Miller W."/>
            <person name="Stoneking T."/>
            <person name="Nhan M."/>
            <person name="Waterston R."/>
            <person name="Wilson R.K."/>
        </authorList>
    </citation>
    <scope>NUCLEOTIDE SEQUENCE [LARGE SCALE GENOMIC DNA]</scope>
    <source>
        <strain>LT2 / SGSC1412 / ATCC 700720</strain>
    </source>
</reference>
<name>SINR_SALTY</name>
<comment type="function">
    <text>Probable regulatory protein. Its target is not known.</text>
</comment>
<comment type="similarity">
    <text evidence="2">Belongs to the LysR transcriptional regulatory family.</text>
</comment>
<accession>P37459</accession>
<dbReference type="EMBL" id="L04307">
    <property type="protein sequence ID" value="AAA27226.1"/>
    <property type="molecule type" value="Genomic_DNA"/>
</dbReference>
<dbReference type="EMBL" id="AE006468">
    <property type="protein sequence ID" value="AAL19261.1"/>
    <property type="molecule type" value="Genomic_DNA"/>
</dbReference>
<dbReference type="PIR" id="A47269">
    <property type="entry name" value="A47269"/>
</dbReference>
<dbReference type="RefSeq" id="NP_459302.1">
    <property type="nucleotide sequence ID" value="NC_003197.2"/>
</dbReference>
<dbReference type="RefSeq" id="WP_000970302.1">
    <property type="nucleotide sequence ID" value="NC_003197.2"/>
</dbReference>
<dbReference type="SMR" id="P37459"/>
<dbReference type="STRING" id="99287.STM0304"/>
<dbReference type="PaxDb" id="99287-STM0304"/>
<dbReference type="DNASU" id="1251823"/>
<dbReference type="GeneID" id="1251823"/>
<dbReference type="KEGG" id="stm:STM0304"/>
<dbReference type="PATRIC" id="fig|99287.12.peg.323"/>
<dbReference type="HOGENOM" id="CLU_039613_16_2_6"/>
<dbReference type="OMA" id="INIATKC"/>
<dbReference type="PhylomeDB" id="P37459"/>
<dbReference type="BioCyc" id="SENT99287:STM0304-MONOMER"/>
<dbReference type="Proteomes" id="UP000001014">
    <property type="component" value="Chromosome"/>
</dbReference>
<dbReference type="GO" id="GO:0003700">
    <property type="term" value="F:DNA-binding transcription factor activity"/>
    <property type="evidence" value="ECO:0000318"/>
    <property type="project" value="GO_Central"/>
</dbReference>
<dbReference type="GO" id="GO:0043565">
    <property type="term" value="F:sequence-specific DNA binding"/>
    <property type="evidence" value="ECO:0000318"/>
    <property type="project" value="GO_Central"/>
</dbReference>
<dbReference type="GO" id="GO:0006351">
    <property type="term" value="P:DNA-templated transcription"/>
    <property type="evidence" value="ECO:0000318"/>
    <property type="project" value="GO_Central"/>
</dbReference>
<dbReference type="Gene3D" id="3.40.190.290">
    <property type="match status" value="1"/>
</dbReference>
<dbReference type="Gene3D" id="1.10.10.10">
    <property type="entry name" value="Winged helix-like DNA-binding domain superfamily/Winged helix DNA-binding domain"/>
    <property type="match status" value="1"/>
</dbReference>
<dbReference type="InterPro" id="IPR005119">
    <property type="entry name" value="LysR_subst-bd"/>
</dbReference>
<dbReference type="InterPro" id="IPR000847">
    <property type="entry name" value="Tscrpt_reg_HTH_LysR"/>
</dbReference>
<dbReference type="InterPro" id="IPR036388">
    <property type="entry name" value="WH-like_DNA-bd_sf"/>
</dbReference>
<dbReference type="InterPro" id="IPR036390">
    <property type="entry name" value="WH_DNA-bd_sf"/>
</dbReference>
<dbReference type="PANTHER" id="PTHR30537">
    <property type="entry name" value="HTH-TYPE TRANSCRIPTIONAL REGULATOR"/>
    <property type="match status" value="1"/>
</dbReference>
<dbReference type="PANTHER" id="PTHR30537:SF21">
    <property type="entry name" value="HTH-TYPE TRANSCRIPTIONAL REGULATOR SINR-RELATED"/>
    <property type="match status" value="1"/>
</dbReference>
<dbReference type="Pfam" id="PF00126">
    <property type="entry name" value="HTH_1"/>
    <property type="match status" value="1"/>
</dbReference>
<dbReference type="Pfam" id="PF03466">
    <property type="entry name" value="LysR_substrate"/>
    <property type="match status" value="1"/>
</dbReference>
<dbReference type="SUPFAM" id="SSF53850">
    <property type="entry name" value="Periplasmic binding protein-like II"/>
    <property type="match status" value="1"/>
</dbReference>
<dbReference type="SUPFAM" id="SSF46785">
    <property type="entry name" value="Winged helix' DNA-binding domain"/>
    <property type="match status" value="1"/>
</dbReference>
<dbReference type="PROSITE" id="PS50931">
    <property type="entry name" value="HTH_LYSR"/>
    <property type="match status" value="1"/>
</dbReference>
<evidence type="ECO:0000255" key="1">
    <source>
        <dbReference type="PROSITE-ProRule" id="PRU00253"/>
    </source>
</evidence>
<evidence type="ECO:0000305" key="2"/>
<sequence length="315" mass="36324">MMELINNRGMRDWMIFIKVAEVGNLSRAARELDISISAVSKSLSRLENSIEVTLLRRDSHHLELTGAGQTAYASMKRITSSFQSLLDELRNPDKIIRGSIKFSAPAIVCEFLANKWIWEFTASYPDTKIYLDSRERSDFFSKSLEFDELVFKSGIIESEDLVYRKISPLKLVLCASPKYIRKYGRISHPGDLENHIIVGLHNHGLSGPLTLFRQDESYTISGAVNVHLSSNNLLSVLNLVLEGKGINLMTPAWLATKYLKNNELEIILPEWRVPDLPIYLVWRHRQYYSPLFQRFLSFIEDKWNNRPQIDFLNDD</sequence>
<feature type="chain" id="PRO_0000105750" description="Probable HTH-type transcriptional regulator SinR">
    <location>
        <begin position="1"/>
        <end position="315"/>
    </location>
</feature>
<feature type="domain" description="HTH lysR-type" evidence="1">
    <location>
        <begin position="8"/>
        <end position="65"/>
    </location>
</feature>
<feature type="DNA-binding region" description="H-T-H motif" evidence="1">
    <location>
        <begin position="25"/>
        <end position="44"/>
    </location>
</feature>
<organism>
    <name type="scientific">Salmonella typhimurium (strain LT2 / SGSC1412 / ATCC 700720)</name>
    <dbReference type="NCBI Taxonomy" id="99287"/>
    <lineage>
        <taxon>Bacteria</taxon>
        <taxon>Pseudomonadati</taxon>
        <taxon>Pseudomonadota</taxon>
        <taxon>Gammaproteobacteria</taxon>
        <taxon>Enterobacterales</taxon>
        <taxon>Enterobacteriaceae</taxon>
        <taxon>Salmonella</taxon>
    </lineage>
</organism>
<keyword id="KW-0238">DNA-binding</keyword>
<keyword id="KW-1185">Reference proteome</keyword>
<keyword id="KW-0804">Transcription</keyword>
<keyword id="KW-0805">Transcription regulation</keyword>
<protein>
    <recommendedName>
        <fullName>Probable HTH-type transcriptional regulator SinR</fullName>
    </recommendedName>
</protein>